<dbReference type="EMBL" id="AC002561">
    <property type="protein sequence ID" value="AAB88652.1"/>
    <property type="status" value="ALT_SEQ"/>
    <property type="molecule type" value="Genomic_DNA"/>
</dbReference>
<dbReference type="EMBL" id="CP002685">
    <property type="protein sequence ID" value="AEC10099.1"/>
    <property type="molecule type" value="Genomic_DNA"/>
</dbReference>
<dbReference type="EMBL" id="CP002685">
    <property type="protein sequence ID" value="AEC10100.1"/>
    <property type="molecule type" value="Genomic_DNA"/>
</dbReference>
<dbReference type="EMBL" id="BT015339">
    <property type="protein sequence ID" value="AAU05462.1"/>
    <property type="molecule type" value="mRNA"/>
</dbReference>
<dbReference type="EMBL" id="BT015712">
    <property type="protein sequence ID" value="AAU45210.1"/>
    <property type="molecule type" value="mRNA"/>
</dbReference>
<dbReference type="EMBL" id="AK228981">
    <property type="protein sequence ID" value="BAF00869.1"/>
    <property type="molecule type" value="mRNA"/>
</dbReference>
<dbReference type="PIR" id="T00937">
    <property type="entry name" value="T00937"/>
</dbReference>
<dbReference type="RefSeq" id="NP_181757.2">
    <molecule id="Q66GR3-1"/>
    <property type="nucleotide sequence ID" value="NM_129790.5"/>
</dbReference>
<dbReference type="RefSeq" id="NP_973670.1">
    <molecule id="Q66GR3-2"/>
    <property type="nucleotide sequence ID" value="NM_201941.2"/>
</dbReference>
<dbReference type="SMR" id="Q66GR3"/>
<dbReference type="BioGRID" id="4166">
    <property type="interactions" value="34"/>
</dbReference>
<dbReference type="FunCoup" id="Q66GR3">
    <property type="interactions" value="311"/>
</dbReference>
<dbReference type="IntAct" id="Q66GR3">
    <property type="interactions" value="30"/>
</dbReference>
<dbReference type="STRING" id="3702.Q66GR3"/>
<dbReference type="iPTMnet" id="Q66GR3"/>
<dbReference type="PaxDb" id="3702-AT2G42280.1"/>
<dbReference type="ProteomicsDB" id="240793">
    <molecule id="Q66GR3-1"/>
</dbReference>
<dbReference type="EnsemblPlants" id="AT2G42280.1">
    <molecule id="Q66GR3-1"/>
    <property type="protein sequence ID" value="AT2G42280.1"/>
    <property type="gene ID" value="AT2G42280"/>
</dbReference>
<dbReference type="EnsemblPlants" id="AT2G42280.2">
    <molecule id="Q66GR3-2"/>
    <property type="protein sequence ID" value="AT2G42280.2"/>
    <property type="gene ID" value="AT2G42280"/>
</dbReference>
<dbReference type="GeneID" id="818829"/>
<dbReference type="Gramene" id="AT2G42280.1">
    <molecule id="Q66GR3-1"/>
    <property type="protein sequence ID" value="AT2G42280.1"/>
    <property type="gene ID" value="AT2G42280"/>
</dbReference>
<dbReference type="Gramene" id="AT2G42280.2">
    <molecule id="Q66GR3-2"/>
    <property type="protein sequence ID" value="AT2G42280.2"/>
    <property type="gene ID" value="AT2G42280"/>
</dbReference>
<dbReference type="KEGG" id="ath:AT2G42280"/>
<dbReference type="Araport" id="AT2G42280"/>
<dbReference type="TAIR" id="AT2G42280">
    <property type="gene designation" value="FBH4"/>
</dbReference>
<dbReference type="eggNOG" id="ENOG502R5PU">
    <property type="taxonomic scope" value="Eukaryota"/>
</dbReference>
<dbReference type="HOGENOM" id="CLU_042981_0_1_1"/>
<dbReference type="InParanoid" id="Q66GR3"/>
<dbReference type="OMA" id="HPQQMAS"/>
<dbReference type="PhylomeDB" id="Q66GR3"/>
<dbReference type="PRO" id="PR:Q66GR3"/>
<dbReference type="Proteomes" id="UP000006548">
    <property type="component" value="Chromosome 2"/>
</dbReference>
<dbReference type="ExpressionAtlas" id="Q66GR3">
    <property type="expression patterns" value="baseline and differential"/>
</dbReference>
<dbReference type="GO" id="GO:0005737">
    <property type="term" value="C:cytoplasm"/>
    <property type="evidence" value="ECO:0000314"/>
    <property type="project" value="UniProtKB"/>
</dbReference>
<dbReference type="GO" id="GO:0005634">
    <property type="term" value="C:nucleus"/>
    <property type="evidence" value="ECO:0000314"/>
    <property type="project" value="UniProtKB"/>
</dbReference>
<dbReference type="GO" id="GO:0000987">
    <property type="term" value="F:cis-regulatory region sequence-specific DNA binding"/>
    <property type="evidence" value="ECO:0000314"/>
    <property type="project" value="UniProtKB"/>
</dbReference>
<dbReference type="GO" id="GO:0003700">
    <property type="term" value="F:DNA-binding transcription factor activity"/>
    <property type="evidence" value="ECO:0000314"/>
    <property type="project" value="UniProtKB"/>
</dbReference>
<dbReference type="GO" id="GO:0046983">
    <property type="term" value="F:protein dimerization activity"/>
    <property type="evidence" value="ECO:0007669"/>
    <property type="project" value="InterPro"/>
</dbReference>
<dbReference type="GO" id="GO:0043562">
    <property type="term" value="P:cellular response to nitrogen levels"/>
    <property type="evidence" value="ECO:0000315"/>
    <property type="project" value="UniProtKB"/>
</dbReference>
<dbReference type="GO" id="GO:0048573">
    <property type="term" value="P:photoperiodism, flowering"/>
    <property type="evidence" value="ECO:0000315"/>
    <property type="project" value="TAIR"/>
</dbReference>
<dbReference type="GO" id="GO:0006355">
    <property type="term" value="P:regulation of DNA-templated transcription"/>
    <property type="evidence" value="ECO:0000304"/>
    <property type="project" value="TAIR"/>
</dbReference>
<dbReference type="GO" id="GO:0010468">
    <property type="term" value="P:regulation of gene expression"/>
    <property type="evidence" value="ECO:0000315"/>
    <property type="project" value="UniProtKB"/>
</dbReference>
<dbReference type="GO" id="GO:0006808">
    <property type="term" value="P:regulation of nitrogen utilization"/>
    <property type="evidence" value="ECO:0000315"/>
    <property type="project" value="UniProtKB"/>
</dbReference>
<dbReference type="GO" id="GO:2000028">
    <property type="term" value="P:regulation of photoperiodism, flowering"/>
    <property type="evidence" value="ECO:0000315"/>
    <property type="project" value="UniProtKB"/>
</dbReference>
<dbReference type="CDD" id="cd11393">
    <property type="entry name" value="bHLH_AtbHLH_like"/>
    <property type="match status" value="1"/>
</dbReference>
<dbReference type="FunFam" id="4.10.280.10:FF:000021">
    <property type="entry name" value="Transcription factor bHLH130 family"/>
    <property type="match status" value="1"/>
</dbReference>
<dbReference type="Gene3D" id="4.10.280.10">
    <property type="entry name" value="Helix-loop-helix DNA-binding domain"/>
    <property type="match status" value="1"/>
</dbReference>
<dbReference type="InterPro" id="IPR045239">
    <property type="entry name" value="bHLH95_bHLH"/>
</dbReference>
<dbReference type="InterPro" id="IPR011598">
    <property type="entry name" value="bHLH_dom"/>
</dbReference>
<dbReference type="InterPro" id="IPR036638">
    <property type="entry name" value="HLH_DNA-bd_sf"/>
</dbReference>
<dbReference type="InterPro" id="IPR045843">
    <property type="entry name" value="IND-like"/>
</dbReference>
<dbReference type="PANTHER" id="PTHR16223:SF351">
    <property type="entry name" value="TRANSCRIPTION FACTOR BHLH130"/>
    <property type="match status" value="1"/>
</dbReference>
<dbReference type="PANTHER" id="PTHR16223">
    <property type="entry name" value="TRANSCRIPTION FACTOR BHLH83-RELATED"/>
    <property type="match status" value="1"/>
</dbReference>
<dbReference type="Pfam" id="PF00010">
    <property type="entry name" value="HLH"/>
    <property type="match status" value="1"/>
</dbReference>
<dbReference type="SMART" id="SM00353">
    <property type="entry name" value="HLH"/>
    <property type="match status" value="1"/>
</dbReference>
<dbReference type="SUPFAM" id="SSF47459">
    <property type="entry name" value="HLH, helix-loop-helix DNA-binding domain"/>
    <property type="match status" value="1"/>
</dbReference>
<dbReference type="PROSITE" id="PS50888">
    <property type="entry name" value="BHLH"/>
    <property type="match status" value="1"/>
</dbReference>
<organism>
    <name type="scientific">Arabidopsis thaliana</name>
    <name type="common">Mouse-ear cress</name>
    <dbReference type="NCBI Taxonomy" id="3702"/>
    <lineage>
        <taxon>Eukaryota</taxon>
        <taxon>Viridiplantae</taxon>
        <taxon>Streptophyta</taxon>
        <taxon>Embryophyta</taxon>
        <taxon>Tracheophyta</taxon>
        <taxon>Spermatophyta</taxon>
        <taxon>Magnoliopsida</taxon>
        <taxon>eudicotyledons</taxon>
        <taxon>Gunneridae</taxon>
        <taxon>Pentapetalae</taxon>
        <taxon>rosids</taxon>
        <taxon>malvids</taxon>
        <taxon>Brassicales</taxon>
        <taxon>Brassicaceae</taxon>
        <taxon>Camelineae</taxon>
        <taxon>Arabidopsis</taxon>
    </lineage>
</organism>
<feature type="chain" id="PRO_0000358814" description="Transcription factor bHLH130">
    <location>
        <begin position="1"/>
        <end position="359"/>
    </location>
</feature>
<feature type="domain" description="bHLH" evidence="1">
    <location>
        <begin position="285"/>
        <end position="335"/>
    </location>
</feature>
<feature type="region of interest" description="Disordered" evidence="2">
    <location>
        <begin position="161"/>
        <end position="186"/>
    </location>
</feature>
<feature type="compositionally biased region" description="Polar residues" evidence="2">
    <location>
        <begin position="167"/>
        <end position="184"/>
    </location>
</feature>
<feature type="modified residue" description="Phosphoserine" evidence="4">
    <location>
        <position position="60"/>
    </location>
</feature>
<feature type="splice variant" id="VSP_036104" description="In isoform 2." evidence="3">
    <original>RRTR</original>
    <variation>TSPS</variation>
    <location>
        <begin position="297"/>
        <end position="300"/>
    </location>
</feature>
<feature type="splice variant" id="VSP_036105" description="In isoform 2." evidence="3">
    <location>
        <begin position="301"/>
        <end position="359"/>
    </location>
</feature>
<gene>
    <name type="primary">BHLH130</name>
    <name type="synonym">EN69</name>
    <name type="ordered locus">At2g42280</name>
    <name type="ORF">T24P15.19</name>
</gene>
<keyword id="KW-0025">Alternative splicing</keyword>
<keyword id="KW-0238">DNA-binding</keyword>
<keyword id="KW-0539">Nucleus</keyword>
<keyword id="KW-0597">Phosphoprotein</keyword>
<keyword id="KW-1185">Reference proteome</keyword>
<keyword id="KW-0804">Transcription</keyword>
<keyword id="KW-0805">Transcription regulation</keyword>
<name>BH130_ARATH</name>
<accession>Q66GR3</accession>
<accession>O48535</accession>
<accession>Q3E6N5</accession>
<proteinExistence type="evidence at protein level"/>
<sequence length="359" mass="39908">MDSNNHLYDPNPTGSGLLRFRSAPSSVLAAFVDDDKIGFDSDRLLSRFVTSNGVNGDLGSPKFEDKSPVSLTNTSVSYAATLPPPPQLEPSSFLGLPPHYPRQSKGIMNSVGLDQFLGINNHHTKPVESNLLRQSSSPAGMFTNLSDQNGYGSMRNLMNYEEDEESPSNSNGLRRHCSLSSRPPSSLGMLSQIPEIAPETNFPYSHWNDPSSFIDNLSSLKREAEDDGKLFLGAQNGESGNRMQLLSHHLSLPKSSSTASDMVSVDKYLQLQDSVPCKIRAKRGCATHPRSIAERVRRTRISERMRKLQELVPNMDKQTNTSDMLDLAVDYIKDLQRQYKILNDNRANCKCMNKEKKSI</sequence>
<comment type="subunit">
    <text evidence="3">Homodimer.</text>
</comment>
<comment type="subcellular location">
    <subcellularLocation>
        <location evidence="1">Nucleus</location>
    </subcellularLocation>
</comment>
<comment type="alternative products">
    <event type="alternative splicing"/>
    <isoform>
        <id>Q66GR3-1</id>
        <name>1</name>
        <sequence type="displayed"/>
    </isoform>
    <isoform>
        <id>Q66GR3-2</id>
        <name>2</name>
        <sequence type="described" ref="VSP_036104 VSP_036105"/>
    </isoform>
</comment>
<comment type="sequence caution" evidence="3">
    <conflict type="erroneous gene model prediction">
        <sequence resource="EMBL-CDS" id="AAB88652"/>
    </conflict>
</comment>
<protein>
    <recommendedName>
        <fullName>Transcription factor bHLH130</fullName>
    </recommendedName>
    <alternativeName>
        <fullName>Basic helix-loop-helix protein 130</fullName>
        <shortName>AtbHLH130</shortName>
        <shortName>bHLH 130</shortName>
    </alternativeName>
    <alternativeName>
        <fullName>Transcription factor EN 69</fullName>
    </alternativeName>
    <alternativeName>
        <fullName>bHLH transcription factor bHLH130</fullName>
    </alternativeName>
</protein>
<reference key="1">
    <citation type="journal article" date="1999" name="Nature">
        <title>Sequence and analysis of chromosome 2 of the plant Arabidopsis thaliana.</title>
        <authorList>
            <person name="Lin X."/>
            <person name="Kaul S."/>
            <person name="Rounsley S.D."/>
            <person name="Shea T.P."/>
            <person name="Benito M.-I."/>
            <person name="Town C.D."/>
            <person name="Fujii C.Y."/>
            <person name="Mason T.M."/>
            <person name="Bowman C.L."/>
            <person name="Barnstead M.E."/>
            <person name="Feldblyum T.V."/>
            <person name="Buell C.R."/>
            <person name="Ketchum K.A."/>
            <person name="Lee J.J."/>
            <person name="Ronning C.M."/>
            <person name="Koo H.L."/>
            <person name="Moffat K.S."/>
            <person name="Cronin L.A."/>
            <person name="Shen M."/>
            <person name="Pai G."/>
            <person name="Van Aken S."/>
            <person name="Umayam L."/>
            <person name="Tallon L.J."/>
            <person name="Gill J.E."/>
            <person name="Adams M.D."/>
            <person name="Carrera A.J."/>
            <person name="Creasy T.H."/>
            <person name="Goodman H.M."/>
            <person name="Somerville C.R."/>
            <person name="Copenhaver G.P."/>
            <person name="Preuss D."/>
            <person name="Nierman W.C."/>
            <person name="White O."/>
            <person name="Eisen J.A."/>
            <person name="Salzberg S.L."/>
            <person name="Fraser C.M."/>
            <person name="Venter J.C."/>
        </authorList>
    </citation>
    <scope>NUCLEOTIDE SEQUENCE [LARGE SCALE GENOMIC DNA]</scope>
    <source>
        <strain>cv. Columbia</strain>
    </source>
</reference>
<reference key="2">
    <citation type="journal article" date="2017" name="Plant J.">
        <title>Araport11: a complete reannotation of the Arabidopsis thaliana reference genome.</title>
        <authorList>
            <person name="Cheng C.Y."/>
            <person name="Krishnakumar V."/>
            <person name="Chan A.P."/>
            <person name="Thibaud-Nissen F."/>
            <person name="Schobel S."/>
            <person name="Town C.D."/>
        </authorList>
    </citation>
    <scope>GENOME REANNOTATION</scope>
    <source>
        <strain>cv. Columbia</strain>
    </source>
</reference>
<reference key="3">
    <citation type="submission" date="2004-09" db="EMBL/GenBank/DDBJ databases">
        <title>Arabidopsis ORF clones.</title>
        <authorList>
            <person name="Kim C.J."/>
            <person name="Chen H."/>
            <person name="Cheuk R.F."/>
            <person name="Shinn P."/>
            <person name="Ecker J.R."/>
        </authorList>
    </citation>
    <scope>NUCLEOTIDE SEQUENCE [LARGE SCALE MRNA] (ISOFORM 1)</scope>
    <source>
        <strain>cv. Columbia</strain>
    </source>
</reference>
<reference key="4">
    <citation type="submission" date="2006-07" db="EMBL/GenBank/DDBJ databases">
        <title>Large-scale analysis of RIKEN Arabidopsis full-length (RAFL) cDNAs.</title>
        <authorList>
            <person name="Totoki Y."/>
            <person name="Seki M."/>
            <person name="Ishida J."/>
            <person name="Nakajima M."/>
            <person name="Enju A."/>
            <person name="Kamiya A."/>
            <person name="Narusaka M."/>
            <person name="Shin-i T."/>
            <person name="Nakagawa M."/>
            <person name="Sakamoto N."/>
            <person name="Oishi K."/>
            <person name="Kohara Y."/>
            <person name="Kobayashi M."/>
            <person name="Toyoda A."/>
            <person name="Sakaki Y."/>
            <person name="Sakurai T."/>
            <person name="Iida K."/>
            <person name="Akiyama K."/>
            <person name="Satou M."/>
            <person name="Toyoda T."/>
            <person name="Konagaya A."/>
            <person name="Carninci P."/>
            <person name="Kawai J."/>
            <person name="Hayashizaki Y."/>
            <person name="Shinozaki K."/>
        </authorList>
    </citation>
    <scope>NUCLEOTIDE SEQUENCE [LARGE SCALE MRNA] (ISOFORM 1)</scope>
    <source>
        <strain>cv. Columbia</strain>
    </source>
</reference>
<reference key="5">
    <citation type="journal article" date="2003" name="Mol. Biol. Evol.">
        <title>The basic helix-loop-helix transcription factor family in plants: a genome-wide study of protein structure and functional diversity.</title>
        <authorList>
            <person name="Heim M.A."/>
            <person name="Jakoby M."/>
            <person name="Werber M."/>
            <person name="Martin C."/>
            <person name="Weisshaar B."/>
            <person name="Bailey P.C."/>
        </authorList>
    </citation>
    <scope>GENE FAMILY</scope>
    <scope>NOMENCLATURE</scope>
</reference>
<reference key="6">
    <citation type="journal article" date="2003" name="Plant Cell">
        <title>The Arabidopsis basic/helix-loop-helix transcription factor family.</title>
        <authorList>
            <person name="Toledo-Ortiz G."/>
            <person name="Huq E."/>
            <person name="Quail P.H."/>
        </authorList>
    </citation>
    <scope>GENE FAMILY</scope>
</reference>
<reference key="7">
    <citation type="journal article" date="2003" name="Plant Cell">
        <title>Update on the basic helix-loop-helix transcription factor gene family in Arabidopsis thaliana.</title>
        <authorList>
            <person name="Bailey P.C."/>
            <person name="Martin C."/>
            <person name="Toledo-Ortiz G."/>
            <person name="Quail P.H."/>
            <person name="Huq E."/>
            <person name="Heim M.A."/>
            <person name="Jakoby M."/>
            <person name="Werber M."/>
            <person name="Weisshaar B."/>
        </authorList>
    </citation>
    <scope>GENE FAMILY</scope>
    <scope>NOMENCLATURE</scope>
</reference>
<reference key="8">
    <citation type="journal article" date="2009" name="Plant Physiol.">
        <title>Large-scale Arabidopsis phosphoproteome profiling reveals novel chloroplast kinase substrates and phosphorylation networks.</title>
        <authorList>
            <person name="Reiland S."/>
            <person name="Messerli G."/>
            <person name="Baerenfaller K."/>
            <person name="Gerrits B."/>
            <person name="Endler A."/>
            <person name="Grossmann J."/>
            <person name="Gruissem W."/>
            <person name="Baginsky S."/>
        </authorList>
    </citation>
    <scope>PHOSPHORYLATION [LARGE SCALE ANALYSIS] AT SER-60</scope>
    <scope>IDENTIFICATION BY MASS SPECTROMETRY [LARGE SCALE ANALYSIS]</scope>
</reference>
<evidence type="ECO:0000255" key="1">
    <source>
        <dbReference type="PROSITE-ProRule" id="PRU00981"/>
    </source>
</evidence>
<evidence type="ECO:0000256" key="2">
    <source>
        <dbReference type="SAM" id="MobiDB-lite"/>
    </source>
</evidence>
<evidence type="ECO:0000305" key="3"/>
<evidence type="ECO:0007744" key="4">
    <source>
    </source>
</evidence>